<dbReference type="EMBL" id="X54090">
    <property type="protein sequence ID" value="CAA38025.1"/>
    <property type="molecule type" value="Genomic_DNA"/>
</dbReference>
<dbReference type="PIR" id="S20917">
    <property type="entry name" value="S20917"/>
</dbReference>
<dbReference type="PIR" id="S22022">
    <property type="entry name" value="S22022"/>
</dbReference>
<dbReference type="RefSeq" id="XP_016746131.1">
    <property type="nucleotide sequence ID" value="XM_016890642.1"/>
</dbReference>
<dbReference type="RefSeq" id="XP_016746212.1">
    <property type="nucleotide sequence ID" value="XM_016890723.1"/>
</dbReference>
<dbReference type="SMR" id="P27518"/>
<dbReference type="STRING" id="3635.P27518"/>
<dbReference type="PaxDb" id="3635-P27518"/>
<dbReference type="KEGG" id="ghi:107954948"/>
<dbReference type="OMA" id="TGTHGEH"/>
<dbReference type="Proteomes" id="UP000189702">
    <property type="component" value="Chromosome 9"/>
</dbReference>
<dbReference type="GO" id="GO:0009535">
    <property type="term" value="C:chloroplast thylakoid membrane"/>
    <property type="evidence" value="ECO:0000318"/>
    <property type="project" value="GO_Central"/>
</dbReference>
<dbReference type="GO" id="GO:0009522">
    <property type="term" value="C:photosystem I"/>
    <property type="evidence" value="ECO:0007669"/>
    <property type="project" value="UniProtKB-KW"/>
</dbReference>
<dbReference type="GO" id="GO:0009523">
    <property type="term" value="C:photosystem II"/>
    <property type="evidence" value="ECO:0007669"/>
    <property type="project" value="UniProtKB-KW"/>
</dbReference>
<dbReference type="GO" id="GO:0016168">
    <property type="term" value="F:chlorophyll binding"/>
    <property type="evidence" value="ECO:0007669"/>
    <property type="project" value="UniProtKB-KW"/>
</dbReference>
<dbReference type="GO" id="GO:0046872">
    <property type="term" value="F:metal ion binding"/>
    <property type="evidence" value="ECO:0007669"/>
    <property type="project" value="UniProtKB-KW"/>
</dbReference>
<dbReference type="GO" id="GO:0009768">
    <property type="term" value="P:photosynthesis, light harvesting in photosystem I"/>
    <property type="evidence" value="ECO:0000318"/>
    <property type="project" value="GO_Central"/>
</dbReference>
<dbReference type="GO" id="GO:0009416">
    <property type="term" value="P:response to light stimulus"/>
    <property type="evidence" value="ECO:0000318"/>
    <property type="project" value="GO_Central"/>
</dbReference>
<dbReference type="FunFam" id="1.10.3460.10:FF:000001">
    <property type="entry name" value="Chlorophyll a-b binding protein, chloroplastic"/>
    <property type="match status" value="1"/>
</dbReference>
<dbReference type="Gene3D" id="1.10.3460.10">
    <property type="entry name" value="Chlorophyll a/b binding protein domain"/>
    <property type="match status" value="1"/>
</dbReference>
<dbReference type="InterPro" id="IPR001344">
    <property type="entry name" value="Chloro_AB-bd_pln"/>
</dbReference>
<dbReference type="InterPro" id="IPR022796">
    <property type="entry name" value="Chloroa_b-bind"/>
</dbReference>
<dbReference type="PANTHER" id="PTHR21649">
    <property type="entry name" value="CHLOROPHYLL A/B BINDING PROTEIN"/>
    <property type="match status" value="1"/>
</dbReference>
<dbReference type="Pfam" id="PF00504">
    <property type="entry name" value="Chloroa_b-bind"/>
    <property type="match status" value="1"/>
</dbReference>
<dbReference type="SUPFAM" id="SSF103511">
    <property type="entry name" value="Chlorophyll a-b binding protein"/>
    <property type="match status" value="1"/>
</dbReference>
<gene>
    <name type="primary">CAB-151</name>
</gene>
<reference key="1">
    <citation type="journal article" date="1992" name="Plant Mol. Biol.">
        <title>Sequence of cab-151, a gene encoding a photosystem II type II chlorophyll a/b-binding protein in cotton.</title>
        <authorList>
            <person name="Sagliocco F."/>
            <person name="Kapazoglou A."/>
            <person name="Dure L. III"/>
        </authorList>
    </citation>
    <scope>NUCLEOTIDE SEQUENCE [GENOMIC DNA]</scope>
    <source>
        <strain>cv. Coker 201</strain>
        <tissue>Leaf</tissue>
    </source>
</reference>
<comment type="function">
    <text>The light-harvesting complex (LHC) functions as a light receptor, it captures and delivers excitation energy to photosystems with which it is closely associated.</text>
</comment>
<comment type="cofactor">
    <text evidence="1">Binds at least 14 chlorophylls (8 Chl-a and 6 Chl-b) and carotenoids such as lutein and neoxanthin.</text>
</comment>
<comment type="subunit">
    <text>The LHC complex consists of chlorophyll a-b binding proteins.</text>
</comment>
<comment type="subcellular location">
    <subcellularLocation>
        <location>Plastid</location>
        <location>Chloroplast thylakoid membrane</location>
        <topology>Multi-pass membrane protein</topology>
    </subcellularLocation>
</comment>
<comment type="tissue specificity">
    <text>Present at high levels in leaves and cotyledons.</text>
</comment>
<comment type="induction">
    <text>Markedly increased by light.</text>
</comment>
<comment type="domain">
    <text>The N-terminus of the protein extends into the stroma where it is involved with adhesion of granal membranes and post-translational modifications; both are believed to mediate the distribution of excitation energy between photosystems I and II.</text>
</comment>
<comment type="PTM">
    <text evidence="1">Photoregulated by reversible phosphorylation of its threonine residues.</text>
</comment>
<comment type="similarity">
    <text evidence="5">Belongs to the light-harvesting chlorophyll a/b-binding (LHC) protein family.</text>
</comment>
<organism>
    <name type="scientific">Gossypium hirsutum</name>
    <name type="common">Upland cotton</name>
    <name type="synonym">Gossypium mexicanum</name>
    <dbReference type="NCBI Taxonomy" id="3635"/>
    <lineage>
        <taxon>Eukaryota</taxon>
        <taxon>Viridiplantae</taxon>
        <taxon>Streptophyta</taxon>
        <taxon>Embryophyta</taxon>
        <taxon>Tracheophyta</taxon>
        <taxon>Spermatophyta</taxon>
        <taxon>Magnoliopsida</taxon>
        <taxon>eudicotyledons</taxon>
        <taxon>Gunneridae</taxon>
        <taxon>Pentapetalae</taxon>
        <taxon>rosids</taxon>
        <taxon>malvids</taxon>
        <taxon>Malvales</taxon>
        <taxon>Malvaceae</taxon>
        <taxon>Malvoideae</taxon>
        <taxon>Gossypium</taxon>
    </lineage>
</organism>
<keyword id="KW-0007">Acetylation</keyword>
<keyword id="KW-0148">Chlorophyll</keyword>
<keyword id="KW-0150">Chloroplast</keyword>
<keyword id="KW-0157">Chromophore</keyword>
<keyword id="KW-0460">Magnesium</keyword>
<keyword id="KW-0472">Membrane</keyword>
<keyword id="KW-0479">Metal-binding</keyword>
<keyword id="KW-0597">Phosphoprotein</keyword>
<keyword id="KW-0602">Photosynthesis</keyword>
<keyword id="KW-0603">Photosystem I</keyword>
<keyword id="KW-0604">Photosystem II</keyword>
<keyword id="KW-0934">Plastid</keyword>
<keyword id="KW-1185">Reference proteome</keyword>
<keyword id="KW-0793">Thylakoid</keyword>
<keyword id="KW-0809">Transit peptide</keyword>
<keyword id="KW-0812">Transmembrane</keyword>
<keyword id="KW-1133">Transmembrane helix</keyword>
<proteinExistence type="evidence at transcript level"/>
<protein>
    <recommendedName>
        <fullName>Chlorophyll a-b binding protein 151, chloroplastic</fullName>
    </recommendedName>
    <alternativeName>
        <fullName>LHCII type II CAB-151</fullName>
        <shortName>LHCP</shortName>
    </alternativeName>
</protein>
<sequence>MATSAIQQSAFAGQTALKQSNELVCKIGAVGGGRVSMRRTVKSAPTSIWYGPDRPKYLGPFSDQIPSYLTGEFPGDYGWDTAGLSADPETFAKNRELEVIHCRWAMLGALGCVFPEILSKNGVKFGEAVWFKAGSQIFSEGGLDYLGNPNLIHAQSILAIWACQVVLMGFVEGYRVGGGPLGEGLDPIYPGGAFDPLGLADDPDAFAELKVKEIKNGRLAMFSMFGFFVQAIVTGKGPIENLFDHLADPVANNAWAYATNFVPGK</sequence>
<accession>P27518</accession>
<feature type="transit peptide" description="Chloroplast" evidence="5">
    <location>
        <begin position="1"/>
        <end position="37"/>
    </location>
</feature>
<feature type="chain" id="PRO_0000003659" description="Chlorophyll a-b binding protein 151, chloroplastic">
    <location>
        <begin position="38"/>
        <end position="265"/>
    </location>
</feature>
<feature type="transmembrane region" description="Helical" evidence="4">
    <location>
        <begin position="99"/>
        <end position="119"/>
    </location>
</feature>
<feature type="transmembrane region" description="Helical" evidence="4">
    <location>
        <begin position="151"/>
        <end position="171"/>
    </location>
</feature>
<feature type="transmembrane region" description="Helical" evidence="4">
    <location>
        <begin position="219"/>
        <end position="239"/>
    </location>
</feature>
<feature type="binding site" description="axial binding residue" evidence="3">
    <location>
        <position position="57"/>
    </location>
    <ligand>
        <name>chlorophyll b</name>
        <dbReference type="ChEBI" id="CHEBI:61721"/>
        <label>1</label>
    </ligand>
    <ligandPart>
        <name>Mg</name>
        <dbReference type="ChEBI" id="CHEBI:25107"/>
    </ligandPart>
</feature>
<feature type="binding site" evidence="1">
    <location>
        <position position="79"/>
    </location>
    <ligand>
        <name>chlorophyll a</name>
        <dbReference type="ChEBI" id="CHEBI:58416"/>
        <label>1</label>
    </ligand>
</feature>
<feature type="binding site" evidence="1">
    <location>
        <position position="85"/>
    </location>
    <ligand>
        <name>chlorophyll a</name>
        <dbReference type="ChEBI" id="CHEBI:58416"/>
        <label>1</label>
    </ligand>
</feature>
<feature type="binding site" description="axial binding residue" evidence="3">
    <location>
        <position position="98"/>
    </location>
    <ligand>
        <name>chlorophyll a</name>
        <dbReference type="ChEBI" id="CHEBI:58416"/>
        <label>1</label>
    </ligand>
    <ligandPart>
        <name>Mg</name>
        <dbReference type="ChEBI" id="CHEBI:25107"/>
    </ligandPart>
</feature>
<feature type="binding site" description="axial binding residue" evidence="3">
    <location>
        <position position="101"/>
    </location>
    <ligand>
        <name>chlorophyll a</name>
        <dbReference type="ChEBI" id="CHEBI:58416"/>
        <label>2</label>
    </ligand>
    <ligandPart>
        <name>Mg</name>
        <dbReference type="ChEBI" id="CHEBI:25107"/>
    </ligandPart>
</feature>
<feature type="binding site" evidence="1">
    <location>
        <position position="103"/>
    </location>
    <ligand>
        <name>chlorophyll b</name>
        <dbReference type="ChEBI" id="CHEBI:61721"/>
        <label>2</label>
    </ligand>
</feature>
<feature type="binding site" evidence="1">
    <location>
        <position position="136"/>
    </location>
    <ligand>
        <name>chlorophyll a</name>
        <dbReference type="ChEBI" id="CHEBI:58416"/>
        <label>3</label>
    </ligand>
</feature>
<feature type="binding site" evidence="1">
    <location>
        <position position="146"/>
    </location>
    <ligand>
        <name>chlorophyll a</name>
        <dbReference type="ChEBI" id="CHEBI:58416"/>
        <label>3</label>
    </ligand>
</feature>
<feature type="binding site" description="axial binding residue" evidence="1">
    <location>
        <position position="152"/>
    </location>
    <ligand>
        <name>chlorophyll b</name>
        <dbReference type="ChEBI" id="CHEBI:61721"/>
        <label>2</label>
    </ligand>
    <ligandPart>
        <name>Mg</name>
        <dbReference type="ChEBI" id="CHEBI:25107"/>
    </ligandPart>
</feature>
<feature type="binding site" evidence="1">
    <location>
        <position position="156"/>
    </location>
    <ligand>
        <name>chlorophyll b</name>
        <dbReference type="ChEBI" id="CHEBI:61721"/>
        <label>3</label>
    </ligand>
</feature>
<feature type="binding site" evidence="1">
    <location>
        <position position="164"/>
    </location>
    <ligand>
        <name>chlorophyll b</name>
        <dbReference type="ChEBI" id="CHEBI:61721"/>
        <label>4</label>
    </ligand>
</feature>
<feature type="binding site" evidence="2">
    <location>
        <position position="164"/>
    </location>
    <ligand>
        <name>chlorophyll b</name>
        <dbReference type="ChEBI" id="CHEBI:61721"/>
        <label>5</label>
    </ligand>
</feature>
<feature type="binding site" description="axial binding residue" evidence="3">
    <location>
        <position position="172"/>
    </location>
    <ligand>
        <name>chlorophyll b</name>
        <dbReference type="ChEBI" id="CHEBI:61721"/>
        <label>3</label>
    </ligand>
    <ligandPart>
        <name>Mg</name>
        <dbReference type="ChEBI" id="CHEBI:25107"/>
    </ligandPart>
</feature>
<feature type="binding site" evidence="1">
    <location>
        <position position="175"/>
    </location>
    <ligand>
        <name>chlorophyll b</name>
        <dbReference type="ChEBI" id="CHEBI:61721"/>
        <label>4</label>
    </ligand>
</feature>
<feature type="binding site" evidence="1">
    <location>
        <position position="181"/>
    </location>
    <ligand>
        <name>chlorophyll b</name>
        <dbReference type="ChEBI" id="CHEBI:61721"/>
        <label>2</label>
    </ligand>
</feature>
<feature type="binding site" evidence="1">
    <location>
        <position position="212"/>
    </location>
    <ligand>
        <name>chlorophyll a</name>
        <dbReference type="ChEBI" id="CHEBI:58416"/>
        <label>5</label>
    </ligand>
</feature>
<feature type="binding site" description="axial binding residue" evidence="3">
    <location>
        <position position="213"/>
    </location>
    <ligand>
        <name>chlorophyll a</name>
        <dbReference type="ChEBI" id="CHEBI:58416"/>
        <label>3</label>
    </ligand>
    <ligandPart>
        <name>Mg</name>
        <dbReference type="ChEBI" id="CHEBI:25107"/>
    </ligandPart>
</feature>
<feature type="binding site" description="axial binding residue" evidence="3">
    <location>
        <position position="216"/>
    </location>
    <ligand>
        <name>chlorophyll a</name>
        <dbReference type="ChEBI" id="CHEBI:58416"/>
        <label>4</label>
    </ligand>
    <ligandPart>
        <name>Mg</name>
        <dbReference type="ChEBI" id="CHEBI:25107"/>
    </ligandPart>
</feature>
<feature type="binding site" evidence="1">
    <location>
        <position position="218"/>
    </location>
    <ligand>
        <name>chlorophyll a</name>
        <dbReference type="ChEBI" id="CHEBI:58416"/>
        <label>1</label>
    </ligand>
</feature>
<feature type="binding site" description="axial binding residue" evidence="3">
    <location>
        <position position="230"/>
    </location>
    <ligand>
        <name>chlorophyll a</name>
        <dbReference type="ChEBI" id="CHEBI:58416"/>
        <label>5</label>
    </ligand>
    <ligandPart>
        <name>Mg</name>
        <dbReference type="ChEBI" id="CHEBI:25107"/>
    </ligandPart>
</feature>
<feature type="binding site" description="axial binding residue" evidence="3">
    <location>
        <position position="245"/>
    </location>
    <ligand>
        <name>chlorophyll a</name>
        <dbReference type="ChEBI" id="CHEBI:58416"/>
        <label>6</label>
    </ligand>
    <ligandPart>
        <name>Mg</name>
        <dbReference type="ChEBI" id="CHEBI:25107"/>
    </ligandPart>
</feature>
<feature type="binding site" evidence="1">
    <location>
        <position position="254"/>
    </location>
    <ligand>
        <name>chlorophyll a</name>
        <dbReference type="ChEBI" id="CHEBI:58416"/>
        <label>6</label>
    </ligand>
</feature>
<feature type="binding site" evidence="1">
    <location>
        <position position="261"/>
    </location>
    <ligand>
        <name>chlorophyll b</name>
        <dbReference type="ChEBI" id="CHEBI:61721"/>
        <label>5</label>
    </ligand>
</feature>
<feature type="modified residue" description="N2-acetylarginine" evidence="1">
    <location>
        <position position="38"/>
    </location>
</feature>
<feature type="modified residue" description="Phosphothreonine" evidence="1">
    <location>
        <position position="40"/>
    </location>
</feature>
<name>CB21_GOSHI</name>
<evidence type="ECO:0000250" key="1"/>
<evidence type="ECO:0000250" key="2">
    <source>
        <dbReference type="UniProtKB" id="P07371"/>
    </source>
</evidence>
<evidence type="ECO:0000250" key="3">
    <source>
        <dbReference type="UniProtKB" id="P12333"/>
    </source>
</evidence>
<evidence type="ECO:0000255" key="4"/>
<evidence type="ECO:0000305" key="5"/>